<protein>
    <recommendedName>
        <fullName evidence="1">Malonate-semialdehyde dehydrogenase</fullName>
        <shortName evidence="1">MSA dehydrogenase</shortName>
        <ecNumber evidence="1">1.2.1.27</ecNumber>
    </recommendedName>
    <alternativeName>
        <fullName evidence="1">Methylmalonate-semialdehyde dehydrogenase</fullName>
        <shortName evidence="1">MMSA dehydrogenase</shortName>
        <shortName evidence="1">MSDH</shortName>
    </alternativeName>
</protein>
<feature type="chain" id="PRO_0000352345" description="Malonate-semialdehyde dehydrogenase">
    <location>
        <begin position="1"/>
        <end position="488"/>
    </location>
</feature>
<feature type="active site" description="Nucleophile" evidence="1">
    <location>
        <position position="284"/>
    </location>
</feature>
<feature type="binding site" evidence="1">
    <location>
        <position position="150"/>
    </location>
    <ligand>
        <name>NAD(+)</name>
        <dbReference type="ChEBI" id="CHEBI:57540"/>
    </ligand>
</feature>
<feature type="binding site" evidence="1">
    <location>
        <position position="152"/>
    </location>
    <ligand>
        <name>NAD(+)</name>
        <dbReference type="ChEBI" id="CHEBI:57540"/>
    </ligand>
</feature>
<feature type="binding site" evidence="1">
    <location>
        <position position="176"/>
    </location>
    <ligand>
        <name>NAD(+)</name>
        <dbReference type="ChEBI" id="CHEBI:57540"/>
    </ligand>
</feature>
<feature type="binding site" evidence="1">
    <location>
        <position position="179"/>
    </location>
    <ligand>
        <name>NAD(+)</name>
        <dbReference type="ChEBI" id="CHEBI:57540"/>
    </ligand>
</feature>
<feature type="binding site" evidence="1">
    <location>
        <position position="180"/>
    </location>
    <ligand>
        <name>NAD(+)</name>
        <dbReference type="ChEBI" id="CHEBI:57540"/>
    </ligand>
</feature>
<feature type="binding site" evidence="1">
    <location>
        <position position="229"/>
    </location>
    <ligand>
        <name>NAD(+)</name>
        <dbReference type="ChEBI" id="CHEBI:57540"/>
    </ligand>
</feature>
<feature type="binding site" evidence="1">
    <location>
        <position position="251"/>
    </location>
    <ligand>
        <name>NAD(+)</name>
        <dbReference type="ChEBI" id="CHEBI:57540"/>
    </ligand>
</feature>
<feature type="binding site" evidence="1">
    <location>
        <position position="382"/>
    </location>
    <ligand>
        <name>NAD(+)</name>
        <dbReference type="ChEBI" id="CHEBI:57540"/>
    </ligand>
</feature>
<evidence type="ECO:0000255" key="1">
    <source>
        <dbReference type="HAMAP-Rule" id="MF_01670"/>
    </source>
</evidence>
<reference key="1">
    <citation type="journal article" date="2001" name="Science">
        <title>Comparative genomics of Listeria species.</title>
        <authorList>
            <person name="Glaser P."/>
            <person name="Frangeul L."/>
            <person name="Buchrieser C."/>
            <person name="Rusniok C."/>
            <person name="Amend A."/>
            <person name="Baquero F."/>
            <person name="Berche P."/>
            <person name="Bloecker H."/>
            <person name="Brandt P."/>
            <person name="Chakraborty T."/>
            <person name="Charbit A."/>
            <person name="Chetouani F."/>
            <person name="Couve E."/>
            <person name="de Daruvar A."/>
            <person name="Dehoux P."/>
            <person name="Domann E."/>
            <person name="Dominguez-Bernal G."/>
            <person name="Duchaud E."/>
            <person name="Durant L."/>
            <person name="Dussurget O."/>
            <person name="Entian K.-D."/>
            <person name="Fsihi H."/>
            <person name="Garcia-del Portillo F."/>
            <person name="Garrido P."/>
            <person name="Gautier L."/>
            <person name="Goebel W."/>
            <person name="Gomez-Lopez N."/>
            <person name="Hain T."/>
            <person name="Hauf J."/>
            <person name="Jackson D."/>
            <person name="Jones L.-M."/>
            <person name="Kaerst U."/>
            <person name="Kreft J."/>
            <person name="Kuhn M."/>
            <person name="Kunst F."/>
            <person name="Kurapkat G."/>
            <person name="Madueno E."/>
            <person name="Maitournam A."/>
            <person name="Mata Vicente J."/>
            <person name="Ng E."/>
            <person name="Nedjari H."/>
            <person name="Nordsiek G."/>
            <person name="Novella S."/>
            <person name="de Pablos B."/>
            <person name="Perez-Diaz J.-C."/>
            <person name="Purcell R."/>
            <person name="Remmel B."/>
            <person name="Rose M."/>
            <person name="Schlueter T."/>
            <person name="Simoes N."/>
            <person name="Tierrez A."/>
            <person name="Vazquez-Boland J.-A."/>
            <person name="Voss H."/>
            <person name="Wehland J."/>
            <person name="Cossart P."/>
        </authorList>
    </citation>
    <scope>NUCLEOTIDE SEQUENCE [LARGE SCALE GENOMIC DNA]</scope>
    <source>
        <strain>ATCC BAA-680 / CLIP 11262</strain>
    </source>
</reference>
<gene>
    <name evidence="1" type="primary">iolA</name>
    <name type="ordered locus">lin0401</name>
</gene>
<organism>
    <name type="scientific">Listeria innocua serovar 6a (strain ATCC BAA-680 / CLIP 11262)</name>
    <dbReference type="NCBI Taxonomy" id="272626"/>
    <lineage>
        <taxon>Bacteria</taxon>
        <taxon>Bacillati</taxon>
        <taxon>Bacillota</taxon>
        <taxon>Bacilli</taxon>
        <taxon>Bacillales</taxon>
        <taxon>Listeriaceae</taxon>
        <taxon>Listeria</taxon>
    </lineage>
</organism>
<comment type="function">
    <text evidence="1">Catalyzes the oxidation of malonate semialdehyde (MSA) and methylmalonate semialdehyde (MMSA) into acetyl-CoA and propanoyl-CoA, respectively. Is involved in a myo-inositol catabolic pathway. Bicarbonate, and not CO2, is the end-product of the enzymatic reaction.</text>
</comment>
<comment type="catalytic activity">
    <reaction evidence="1">
        <text>3-oxopropanoate + NAD(+) + CoA + H2O = hydrogencarbonate + acetyl-CoA + NADH + H(+)</text>
        <dbReference type="Rhea" id="RHEA:76615"/>
        <dbReference type="ChEBI" id="CHEBI:15377"/>
        <dbReference type="ChEBI" id="CHEBI:15378"/>
        <dbReference type="ChEBI" id="CHEBI:17544"/>
        <dbReference type="ChEBI" id="CHEBI:33190"/>
        <dbReference type="ChEBI" id="CHEBI:57287"/>
        <dbReference type="ChEBI" id="CHEBI:57288"/>
        <dbReference type="ChEBI" id="CHEBI:57540"/>
        <dbReference type="ChEBI" id="CHEBI:57945"/>
        <dbReference type="EC" id="1.2.1.27"/>
    </reaction>
    <physiologicalReaction direction="left-to-right" evidence="1">
        <dbReference type="Rhea" id="RHEA:76616"/>
    </physiologicalReaction>
</comment>
<comment type="catalytic activity">
    <reaction evidence="1">
        <text>2-methyl-3-oxopropanoate + NAD(+) + CoA + H2O = propanoyl-CoA + hydrogencarbonate + NADH + H(+)</text>
        <dbReference type="Rhea" id="RHEA:20804"/>
        <dbReference type="ChEBI" id="CHEBI:15377"/>
        <dbReference type="ChEBI" id="CHEBI:15378"/>
        <dbReference type="ChEBI" id="CHEBI:17544"/>
        <dbReference type="ChEBI" id="CHEBI:57287"/>
        <dbReference type="ChEBI" id="CHEBI:57392"/>
        <dbReference type="ChEBI" id="CHEBI:57540"/>
        <dbReference type="ChEBI" id="CHEBI:57700"/>
        <dbReference type="ChEBI" id="CHEBI:57945"/>
        <dbReference type="EC" id="1.2.1.27"/>
    </reaction>
    <physiologicalReaction direction="left-to-right" evidence="1">
        <dbReference type="Rhea" id="RHEA:20805"/>
    </physiologicalReaction>
</comment>
<comment type="pathway">
    <text evidence="1">Polyol metabolism; myo-inositol degradation into acetyl-CoA; acetyl-CoA from myo-inositol: step 7/7.</text>
</comment>
<comment type="subunit">
    <text evidence="1">Homotetramer.</text>
</comment>
<comment type="similarity">
    <text evidence="1">Belongs to the aldehyde dehydrogenase family. IolA subfamily.</text>
</comment>
<accession>Q92EQ7</accession>
<dbReference type="EC" id="1.2.1.27" evidence="1"/>
<dbReference type="EMBL" id="AL596164">
    <property type="protein sequence ID" value="CAC95634.1"/>
    <property type="molecule type" value="Genomic_DNA"/>
</dbReference>
<dbReference type="PIR" id="AB1483">
    <property type="entry name" value="AB1483"/>
</dbReference>
<dbReference type="RefSeq" id="WP_010990384.1">
    <property type="nucleotide sequence ID" value="NC_003212.1"/>
</dbReference>
<dbReference type="SMR" id="Q92EQ7"/>
<dbReference type="STRING" id="272626.gene:17564728"/>
<dbReference type="GeneID" id="93233852"/>
<dbReference type="KEGG" id="lin:lin0401"/>
<dbReference type="eggNOG" id="COG1012">
    <property type="taxonomic scope" value="Bacteria"/>
</dbReference>
<dbReference type="HOGENOM" id="CLU_005391_1_10_9"/>
<dbReference type="OrthoDB" id="9762913at2"/>
<dbReference type="UniPathway" id="UPA00076">
    <property type="reaction ID" value="UER00148"/>
</dbReference>
<dbReference type="Proteomes" id="UP000002513">
    <property type="component" value="Chromosome"/>
</dbReference>
<dbReference type="GO" id="GO:0018478">
    <property type="term" value="F:malonate-semialdehyde dehydrogenase (acetylating) activity"/>
    <property type="evidence" value="ECO:0007669"/>
    <property type="project" value="UniProtKB-UniRule"/>
</dbReference>
<dbReference type="GO" id="GO:0004491">
    <property type="term" value="F:methylmalonate-semialdehyde dehydrogenase (acylating, NAD) activity"/>
    <property type="evidence" value="ECO:0007669"/>
    <property type="project" value="UniProtKB-UniRule"/>
</dbReference>
<dbReference type="GO" id="GO:0019310">
    <property type="term" value="P:inositol catabolic process"/>
    <property type="evidence" value="ECO:0007669"/>
    <property type="project" value="UniProtKB-UniRule"/>
</dbReference>
<dbReference type="GO" id="GO:0006210">
    <property type="term" value="P:thymine catabolic process"/>
    <property type="evidence" value="ECO:0007669"/>
    <property type="project" value="TreeGrafter"/>
</dbReference>
<dbReference type="GO" id="GO:0006574">
    <property type="term" value="P:valine catabolic process"/>
    <property type="evidence" value="ECO:0007669"/>
    <property type="project" value="TreeGrafter"/>
</dbReference>
<dbReference type="CDD" id="cd07085">
    <property type="entry name" value="ALDH_F6_MMSDH"/>
    <property type="match status" value="1"/>
</dbReference>
<dbReference type="FunFam" id="3.40.309.10:FF:000002">
    <property type="entry name" value="Methylmalonate-semialdehyde dehydrogenase (Acylating)"/>
    <property type="match status" value="1"/>
</dbReference>
<dbReference type="FunFam" id="3.40.605.10:FF:000003">
    <property type="entry name" value="Methylmalonate-semialdehyde dehydrogenase [acylating]"/>
    <property type="match status" value="1"/>
</dbReference>
<dbReference type="Gene3D" id="3.40.605.10">
    <property type="entry name" value="Aldehyde Dehydrogenase, Chain A, domain 1"/>
    <property type="match status" value="1"/>
</dbReference>
<dbReference type="Gene3D" id="3.40.309.10">
    <property type="entry name" value="Aldehyde Dehydrogenase, Chain A, domain 2"/>
    <property type="match status" value="1"/>
</dbReference>
<dbReference type="HAMAP" id="MF_01670">
    <property type="entry name" value="IolA"/>
    <property type="match status" value="1"/>
</dbReference>
<dbReference type="InterPro" id="IPR016161">
    <property type="entry name" value="Ald_DH/histidinol_DH"/>
</dbReference>
<dbReference type="InterPro" id="IPR016163">
    <property type="entry name" value="Ald_DH_C"/>
</dbReference>
<dbReference type="InterPro" id="IPR016160">
    <property type="entry name" value="Ald_DH_CS_CYS"/>
</dbReference>
<dbReference type="InterPro" id="IPR016162">
    <property type="entry name" value="Ald_DH_N"/>
</dbReference>
<dbReference type="InterPro" id="IPR015590">
    <property type="entry name" value="Aldehyde_DH_dom"/>
</dbReference>
<dbReference type="InterPro" id="IPR010061">
    <property type="entry name" value="MeMal-semiAld_DH"/>
</dbReference>
<dbReference type="InterPro" id="IPR023510">
    <property type="entry name" value="MSDH_GmP_bac"/>
</dbReference>
<dbReference type="NCBIfam" id="TIGR01722">
    <property type="entry name" value="MMSDH"/>
    <property type="match status" value="1"/>
</dbReference>
<dbReference type="PANTHER" id="PTHR43866">
    <property type="entry name" value="MALONATE-SEMIALDEHYDE DEHYDROGENASE"/>
    <property type="match status" value="1"/>
</dbReference>
<dbReference type="PANTHER" id="PTHR43866:SF4">
    <property type="entry name" value="MALONATE-SEMIALDEHYDE DEHYDROGENASE"/>
    <property type="match status" value="1"/>
</dbReference>
<dbReference type="Pfam" id="PF00171">
    <property type="entry name" value="Aldedh"/>
    <property type="match status" value="1"/>
</dbReference>
<dbReference type="SUPFAM" id="SSF53720">
    <property type="entry name" value="ALDH-like"/>
    <property type="match status" value="1"/>
</dbReference>
<dbReference type="PROSITE" id="PS00070">
    <property type="entry name" value="ALDEHYDE_DEHYDR_CYS"/>
    <property type="match status" value="1"/>
</dbReference>
<proteinExistence type="inferred from homology"/>
<sequence length="488" mass="53248">MADVRKLKNYINGEWVESKADKYEDVINPATGEVLCQVPISTRAELDQAAVIAEQAFEKWSQVAVPRRARVLFSFQQLLIQHKEELARLITLENGKNLSEARGEVQRGIENVEFAAGAPTLMMGDSLASIATDVEAANYRYPVGVVGGIAPFNFPMMVPCWMFPMAIALGNSFILKPSERTPLLMEKLVELFSEAGLPKGVFNVVYGAHDVVNGILENETIKAVSFVGSKPVGEYVYKTGSANLKRVQALTGAKNHTIVLNDADLEDTVTNVISAAFGSAGERCMACAVVTVEEGIADDFLAALRTAAQNVKIGNGLDDGVFLGPVIREENQKRTIAYIEKGVEEGAKLTVDGRETGLSEGYFVGPTILEDVTTDMTIWKDEIFAPVLSVIRVKNLQEAVRVANQSEFANGACIFTNNAKAIRYFREKIDAGMLGVNLGVPAPMAFFPFSGWKSSFYGTLHANGKDSVDFYTHKKVVTARYSLKGYEE</sequence>
<keyword id="KW-0520">NAD</keyword>
<keyword id="KW-0560">Oxidoreductase</keyword>
<name>IOLA_LISIN</name>